<gene>
    <name evidence="1" type="primary">secM</name>
    <name type="ordered locus">ESA_03241</name>
</gene>
<reference key="1">
    <citation type="journal article" date="2010" name="PLoS ONE">
        <title>Genome sequence of Cronobacter sakazakii BAA-894 and comparative genomic hybridization analysis with other Cronobacter species.</title>
        <authorList>
            <person name="Kucerova E."/>
            <person name="Clifton S.W."/>
            <person name="Xia X.Q."/>
            <person name="Long F."/>
            <person name="Porwollik S."/>
            <person name="Fulton L."/>
            <person name="Fronick C."/>
            <person name="Minx P."/>
            <person name="Kyung K."/>
            <person name="Warren W."/>
            <person name="Fulton R."/>
            <person name="Feng D."/>
            <person name="Wollam A."/>
            <person name="Shah N."/>
            <person name="Bhonagiri V."/>
            <person name="Nash W.E."/>
            <person name="Hallsworth-Pepin K."/>
            <person name="Wilson R.K."/>
            <person name="McClelland M."/>
            <person name="Forsythe S.J."/>
        </authorList>
    </citation>
    <scope>NUCLEOTIDE SEQUENCE [LARGE SCALE GENOMIC DNA]</scope>
    <source>
        <strain>ATCC BAA-894</strain>
    </source>
</reference>
<organism>
    <name type="scientific">Cronobacter sakazakii (strain ATCC BAA-894)</name>
    <name type="common">Enterobacter sakazakii</name>
    <dbReference type="NCBI Taxonomy" id="290339"/>
    <lineage>
        <taxon>Bacteria</taxon>
        <taxon>Pseudomonadati</taxon>
        <taxon>Pseudomonadota</taxon>
        <taxon>Gammaproteobacteria</taxon>
        <taxon>Enterobacterales</taxon>
        <taxon>Enterobacteriaceae</taxon>
        <taxon>Cronobacter</taxon>
    </lineage>
</organism>
<comment type="function">
    <text evidence="1">Regulates secA expression by translational coupling of the secM secA operon. Translational pausing at a specific Pro residue 5 residues before the end of the protein may allow disruption of a mRNA repressor helix that normally suppresses secA translation initiation.</text>
</comment>
<comment type="subcellular location">
    <subcellularLocation>
        <location evidence="1">Cytoplasm</location>
        <location evidence="1">Cytosol</location>
    </subcellularLocation>
    <subcellularLocation>
        <location evidence="1">Periplasm</location>
    </subcellularLocation>
    <text evidence="1">The active form is cytosolic, while the periplasmic form is rapidly degraded, mainly by the tail-specific protease.</text>
</comment>
<comment type="similarity">
    <text evidence="1">Belongs to the SecM family.</text>
</comment>
<comment type="sequence caution" evidence="2">
    <conflict type="erroneous initiation">
        <sequence resource="EMBL-CDS" id="ABU78463"/>
    </conflict>
</comment>
<protein>
    <recommendedName>
        <fullName evidence="1">Secretion monitor</fullName>
    </recommendedName>
</protein>
<proteinExistence type="inferred from homology"/>
<dbReference type="EMBL" id="CP000783">
    <property type="protein sequence ID" value="ABU78463.1"/>
    <property type="status" value="ALT_INIT"/>
    <property type="molecule type" value="Genomic_DNA"/>
</dbReference>
<dbReference type="RefSeq" id="WP_071601446.1">
    <property type="nucleotide sequence ID" value="NC_009778.1"/>
</dbReference>
<dbReference type="GeneID" id="56731927"/>
<dbReference type="KEGG" id="esa:ESA_03241"/>
<dbReference type="HOGENOM" id="CLU_108853_0_0_6"/>
<dbReference type="Proteomes" id="UP000000260">
    <property type="component" value="Chromosome"/>
</dbReference>
<dbReference type="GO" id="GO:0005829">
    <property type="term" value="C:cytosol"/>
    <property type="evidence" value="ECO:0007669"/>
    <property type="project" value="UniProtKB-SubCell"/>
</dbReference>
<dbReference type="GO" id="GO:0042597">
    <property type="term" value="C:periplasmic space"/>
    <property type="evidence" value="ECO:0007669"/>
    <property type="project" value="UniProtKB-SubCell"/>
</dbReference>
<dbReference type="GO" id="GO:0045182">
    <property type="term" value="F:translation regulator activity"/>
    <property type="evidence" value="ECO:0007669"/>
    <property type="project" value="InterPro"/>
</dbReference>
<dbReference type="HAMAP" id="MF_01332">
    <property type="entry name" value="SecM"/>
    <property type="match status" value="1"/>
</dbReference>
<dbReference type="InterPro" id="IPR009502">
    <property type="entry name" value="SecM"/>
</dbReference>
<dbReference type="NCBIfam" id="NF002799">
    <property type="entry name" value="PRK02943.1-1"/>
    <property type="match status" value="1"/>
</dbReference>
<dbReference type="Pfam" id="PF06558">
    <property type="entry name" value="SecM"/>
    <property type="match status" value="1"/>
</dbReference>
<dbReference type="PIRSF" id="PIRSF004572">
    <property type="entry name" value="SecM"/>
    <property type="match status" value="1"/>
</dbReference>
<feature type="signal peptide" evidence="1">
    <location>
        <begin position="1"/>
        <end position="38"/>
    </location>
</feature>
<feature type="chain" id="PRO_0000314443" description="Secretion monitor">
    <location>
        <begin position="39"/>
        <end position="167"/>
    </location>
</feature>
<evidence type="ECO:0000255" key="1">
    <source>
        <dbReference type="HAMAP-Rule" id="MF_01332"/>
    </source>
</evidence>
<evidence type="ECO:0000305" key="2"/>
<keyword id="KW-0963">Cytoplasm</keyword>
<keyword id="KW-0574">Periplasm</keyword>
<keyword id="KW-1185">Reference proteome</keyword>
<keyword id="KW-0732">Signal</keyword>
<name>SECM_CROS8</name>
<sequence>MPGIFTRWRQFGRRYFWPHLLLGMVAASLGLPALNNNAEPAAPAEASTSHTGTLRSFDSLALISETSRRSASFGVDYWQQHAIRTVIRHLSFAMAPQALPMAMEESLPLNAQHLALLDTLSAMLTQDLQPAAAQVQPAPRLLPPLSFTVSAWIRQVQGIRAGPRLLA</sequence>
<accession>A7MQ64</accession>